<feature type="chain" id="PRO_0000327186" description="Protoheme IX farnesyltransferase">
    <location>
        <begin position="1"/>
        <end position="300"/>
    </location>
</feature>
<feature type="transmembrane region" description="Helical" evidence="1">
    <location>
        <begin position="21"/>
        <end position="43"/>
    </location>
</feature>
<feature type="transmembrane region" description="Helical" evidence="1">
    <location>
        <begin position="45"/>
        <end position="65"/>
    </location>
</feature>
<feature type="transmembrane region" description="Helical" evidence="1">
    <location>
        <begin position="94"/>
        <end position="114"/>
    </location>
</feature>
<feature type="transmembrane region" description="Helical" evidence="1">
    <location>
        <begin position="117"/>
        <end position="137"/>
    </location>
</feature>
<feature type="transmembrane region" description="Helical" evidence="1">
    <location>
        <begin position="145"/>
        <end position="167"/>
    </location>
</feature>
<feature type="transmembrane region" description="Helical" evidence="1">
    <location>
        <begin position="171"/>
        <end position="193"/>
    </location>
</feature>
<feature type="transmembrane region" description="Helical" evidence="1">
    <location>
        <begin position="213"/>
        <end position="233"/>
    </location>
</feature>
<feature type="transmembrane region" description="Helical" evidence="1">
    <location>
        <begin position="235"/>
        <end position="255"/>
    </location>
</feature>
<feature type="transmembrane region" description="Helical" evidence="1">
    <location>
        <begin position="272"/>
        <end position="292"/>
    </location>
</feature>
<proteinExistence type="inferred from homology"/>
<keyword id="KW-1003">Cell membrane</keyword>
<keyword id="KW-0350">Heme biosynthesis</keyword>
<keyword id="KW-0472">Membrane</keyword>
<keyword id="KW-0808">Transferase</keyword>
<keyword id="KW-0812">Transmembrane</keyword>
<keyword id="KW-1133">Transmembrane helix</keyword>
<organism>
    <name type="scientific">Tropheryma whipplei (strain TW08/27)</name>
    <name type="common">Whipple's bacillus</name>
    <dbReference type="NCBI Taxonomy" id="218496"/>
    <lineage>
        <taxon>Bacteria</taxon>
        <taxon>Bacillati</taxon>
        <taxon>Actinomycetota</taxon>
        <taxon>Actinomycetes</taxon>
        <taxon>Micrococcales</taxon>
        <taxon>Tropherymataceae</taxon>
        <taxon>Tropheryma</taxon>
    </lineage>
</organism>
<name>COXX_TROW8</name>
<evidence type="ECO:0000255" key="1">
    <source>
        <dbReference type="HAMAP-Rule" id="MF_00154"/>
    </source>
</evidence>
<comment type="function">
    <text evidence="1">Converts heme B (protoheme IX) to heme O by substitution of the vinyl group on carbon 2 of heme B porphyrin ring with a hydroxyethyl farnesyl side group.</text>
</comment>
<comment type="catalytic activity">
    <reaction evidence="1">
        <text>heme b + (2E,6E)-farnesyl diphosphate + H2O = Fe(II)-heme o + diphosphate</text>
        <dbReference type="Rhea" id="RHEA:28070"/>
        <dbReference type="ChEBI" id="CHEBI:15377"/>
        <dbReference type="ChEBI" id="CHEBI:33019"/>
        <dbReference type="ChEBI" id="CHEBI:60344"/>
        <dbReference type="ChEBI" id="CHEBI:60530"/>
        <dbReference type="ChEBI" id="CHEBI:175763"/>
        <dbReference type="EC" id="2.5.1.141"/>
    </reaction>
</comment>
<comment type="pathway">
    <text evidence="1">Porphyrin-containing compound metabolism; heme O biosynthesis; heme O from protoheme: step 1/1.</text>
</comment>
<comment type="subcellular location">
    <subcellularLocation>
        <location evidence="1">Cell membrane</location>
        <topology evidence="1">Multi-pass membrane protein</topology>
    </subcellularLocation>
</comment>
<comment type="miscellaneous">
    <text evidence="1">Carbon 2 of the heme B porphyrin ring is defined according to the Fischer nomenclature.</text>
</comment>
<comment type="similarity">
    <text evidence="1">Belongs to the UbiA prenyltransferase family. Protoheme IX farnesyltransferase subfamily.</text>
</comment>
<reference key="1">
    <citation type="journal article" date="2003" name="Lancet">
        <title>Sequencing and analysis of the genome of the Whipple's disease bacterium Tropheryma whipplei.</title>
        <authorList>
            <person name="Bentley S.D."/>
            <person name="Maiwald M."/>
            <person name="Murphy L.D."/>
            <person name="Pallen M.J."/>
            <person name="Yeats C.A."/>
            <person name="Dover L.G."/>
            <person name="Norbertczak H.T."/>
            <person name="Besra G.S."/>
            <person name="Quail M.A."/>
            <person name="Harris D.E."/>
            <person name="von Herbay A."/>
            <person name="Goble A."/>
            <person name="Rutter S."/>
            <person name="Squares R."/>
            <person name="Squares S."/>
            <person name="Barrell B.G."/>
            <person name="Parkhill J."/>
            <person name="Relman D.A."/>
        </authorList>
    </citation>
    <scope>NUCLEOTIDE SEQUENCE [LARGE SCALE GENOMIC DNA]</scope>
    <source>
        <strain>TW08/27</strain>
    </source>
</reference>
<sequence length="300" mass="33279">MGMQGRSFARQIRAYVSLTKPRVVELLLLTTVPTMILAQRGVPNPLSVLSVLLGGAMSAGAAGAFNCYIDRDIDSKMSRTRNRPLVTGALSPKASLIFAWMLCVISVLWFLLFVNWLSALLSAIAVFLYAFFYSIVLKKRTPQNIVWGGLAGCMPVLIAWAAVTGSIDWPAIVLFAVVFLWTPPHYWPLSIHYSEDYRLTSIPMLGAIFPRKLVVLQVLLYAFAVVACTLLLIPVAHMTPLYGLFSAVLGAWFVYEIYRLYVRVVRGHEIKAMHIFSLSNTYLSLVFLSVGIDGVVSQLL</sequence>
<accession>Q83NK0</accession>
<dbReference type="EC" id="2.5.1.141" evidence="1"/>
<dbReference type="EMBL" id="BX251411">
    <property type="protein sequence ID" value="CAD67101.1"/>
    <property type="molecule type" value="Genomic_DNA"/>
</dbReference>
<dbReference type="SMR" id="Q83NK0"/>
<dbReference type="KEGG" id="tws:TW432"/>
<dbReference type="HOGENOM" id="CLU_029631_0_1_11"/>
<dbReference type="UniPathway" id="UPA00834">
    <property type="reaction ID" value="UER00712"/>
</dbReference>
<dbReference type="GO" id="GO:0005886">
    <property type="term" value="C:plasma membrane"/>
    <property type="evidence" value="ECO:0007669"/>
    <property type="project" value="UniProtKB-SubCell"/>
</dbReference>
<dbReference type="GO" id="GO:0008495">
    <property type="term" value="F:protoheme IX farnesyltransferase activity"/>
    <property type="evidence" value="ECO:0007669"/>
    <property type="project" value="UniProtKB-UniRule"/>
</dbReference>
<dbReference type="GO" id="GO:0048034">
    <property type="term" value="P:heme O biosynthetic process"/>
    <property type="evidence" value="ECO:0007669"/>
    <property type="project" value="UniProtKB-UniRule"/>
</dbReference>
<dbReference type="CDD" id="cd13957">
    <property type="entry name" value="PT_UbiA_Cox10"/>
    <property type="match status" value="1"/>
</dbReference>
<dbReference type="FunFam" id="1.10.357.140:FF:000001">
    <property type="entry name" value="Protoheme IX farnesyltransferase"/>
    <property type="match status" value="1"/>
</dbReference>
<dbReference type="Gene3D" id="1.10.357.140">
    <property type="entry name" value="UbiA prenyltransferase"/>
    <property type="match status" value="1"/>
</dbReference>
<dbReference type="HAMAP" id="MF_00154">
    <property type="entry name" value="CyoE_CtaB"/>
    <property type="match status" value="1"/>
</dbReference>
<dbReference type="InterPro" id="IPR006369">
    <property type="entry name" value="Protohaem_IX_farnesylTrfase"/>
</dbReference>
<dbReference type="InterPro" id="IPR000537">
    <property type="entry name" value="UbiA_prenyltransferase"/>
</dbReference>
<dbReference type="InterPro" id="IPR030470">
    <property type="entry name" value="UbiA_prenylTrfase_CS"/>
</dbReference>
<dbReference type="InterPro" id="IPR044878">
    <property type="entry name" value="UbiA_sf"/>
</dbReference>
<dbReference type="NCBIfam" id="TIGR01473">
    <property type="entry name" value="cyoE_ctaB"/>
    <property type="match status" value="1"/>
</dbReference>
<dbReference type="NCBIfam" id="NF003349">
    <property type="entry name" value="PRK04375.1-2"/>
    <property type="match status" value="1"/>
</dbReference>
<dbReference type="PANTHER" id="PTHR43448:SF7">
    <property type="entry name" value="4-HYDROXYBENZOATE SOLANESYLTRANSFERASE"/>
    <property type="match status" value="1"/>
</dbReference>
<dbReference type="PANTHER" id="PTHR43448">
    <property type="entry name" value="PROTOHEME IX FARNESYLTRANSFERASE, MITOCHONDRIAL"/>
    <property type="match status" value="1"/>
</dbReference>
<dbReference type="Pfam" id="PF01040">
    <property type="entry name" value="UbiA"/>
    <property type="match status" value="1"/>
</dbReference>
<dbReference type="PROSITE" id="PS00943">
    <property type="entry name" value="UBIA"/>
    <property type="match status" value="1"/>
</dbReference>
<protein>
    <recommendedName>
        <fullName evidence="1">Protoheme IX farnesyltransferase</fullName>
        <ecNumber evidence="1">2.5.1.141</ecNumber>
    </recommendedName>
    <alternativeName>
        <fullName evidence="1">Heme B farnesyltransferase</fullName>
    </alternativeName>
    <alternativeName>
        <fullName evidence="1">Heme O synthase</fullName>
    </alternativeName>
</protein>
<gene>
    <name evidence="1" type="primary">ctaB</name>
    <name type="ordered locus">TW432</name>
</gene>